<proteinExistence type="inferred from homology"/>
<organism>
    <name type="scientific">Aliivibrio fischeri (strain MJ11)</name>
    <name type="common">Vibrio fischeri</name>
    <dbReference type="NCBI Taxonomy" id="388396"/>
    <lineage>
        <taxon>Bacteria</taxon>
        <taxon>Pseudomonadati</taxon>
        <taxon>Pseudomonadota</taxon>
        <taxon>Gammaproteobacteria</taxon>
        <taxon>Vibrionales</taxon>
        <taxon>Vibrionaceae</taxon>
        <taxon>Aliivibrio</taxon>
    </lineage>
</organism>
<feature type="chain" id="PRO_1000090686" description="Phospho-N-acetylmuramoyl-pentapeptide-transferase">
    <location>
        <begin position="1"/>
        <end position="360"/>
    </location>
</feature>
<feature type="transmembrane region" description="Helical" evidence="1">
    <location>
        <begin position="27"/>
        <end position="47"/>
    </location>
</feature>
<feature type="transmembrane region" description="Helical" evidence="1">
    <location>
        <begin position="73"/>
        <end position="93"/>
    </location>
</feature>
<feature type="transmembrane region" description="Helical" evidence="1">
    <location>
        <begin position="94"/>
        <end position="114"/>
    </location>
</feature>
<feature type="transmembrane region" description="Helical" evidence="1">
    <location>
        <begin position="132"/>
        <end position="152"/>
    </location>
</feature>
<feature type="transmembrane region" description="Helical" evidence="1">
    <location>
        <begin position="168"/>
        <end position="188"/>
    </location>
</feature>
<feature type="transmembrane region" description="Helical" evidence="1">
    <location>
        <begin position="199"/>
        <end position="219"/>
    </location>
</feature>
<feature type="transmembrane region" description="Helical" evidence="1">
    <location>
        <begin position="236"/>
        <end position="256"/>
    </location>
</feature>
<feature type="transmembrane region" description="Helical" evidence="1">
    <location>
        <begin position="263"/>
        <end position="283"/>
    </location>
</feature>
<feature type="transmembrane region" description="Helical" evidence="1">
    <location>
        <begin position="288"/>
        <end position="308"/>
    </location>
</feature>
<feature type="transmembrane region" description="Helical" evidence="1">
    <location>
        <begin position="338"/>
        <end position="358"/>
    </location>
</feature>
<comment type="function">
    <text evidence="1">Catalyzes the initial step of the lipid cycle reactions in the biosynthesis of the cell wall peptidoglycan: transfers peptidoglycan precursor phospho-MurNAc-pentapeptide from UDP-MurNAc-pentapeptide onto the lipid carrier undecaprenyl phosphate, yielding undecaprenyl-pyrophosphoryl-MurNAc-pentapeptide, known as lipid I.</text>
</comment>
<comment type="catalytic activity">
    <reaction evidence="1">
        <text>UDP-N-acetyl-alpha-D-muramoyl-L-alanyl-gamma-D-glutamyl-meso-2,6-diaminopimeloyl-D-alanyl-D-alanine + di-trans,octa-cis-undecaprenyl phosphate = di-trans,octa-cis-undecaprenyl diphospho-N-acetyl-alpha-D-muramoyl-L-alanyl-D-glutamyl-meso-2,6-diaminopimeloyl-D-alanyl-D-alanine + UMP</text>
        <dbReference type="Rhea" id="RHEA:28386"/>
        <dbReference type="ChEBI" id="CHEBI:57865"/>
        <dbReference type="ChEBI" id="CHEBI:60392"/>
        <dbReference type="ChEBI" id="CHEBI:61386"/>
        <dbReference type="ChEBI" id="CHEBI:61387"/>
        <dbReference type="EC" id="2.7.8.13"/>
    </reaction>
</comment>
<comment type="cofactor">
    <cofactor evidence="1">
        <name>Mg(2+)</name>
        <dbReference type="ChEBI" id="CHEBI:18420"/>
    </cofactor>
</comment>
<comment type="pathway">
    <text evidence="1">Cell wall biogenesis; peptidoglycan biosynthesis.</text>
</comment>
<comment type="subcellular location">
    <subcellularLocation>
        <location evidence="1">Cell inner membrane</location>
        <topology evidence="1">Multi-pass membrane protein</topology>
    </subcellularLocation>
</comment>
<comment type="similarity">
    <text evidence="1">Belongs to the glycosyltransferase 4 family. MraY subfamily.</text>
</comment>
<gene>
    <name evidence="1" type="primary">mraY</name>
    <name type="ordered locus">VFMJ11_2316</name>
</gene>
<dbReference type="EC" id="2.7.8.13" evidence="1"/>
<dbReference type="EMBL" id="CP001139">
    <property type="protein sequence ID" value="ACH66354.1"/>
    <property type="molecule type" value="Genomic_DNA"/>
</dbReference>
<dbReference type="RefSeq" id="WP_012533666.1">
    <property type="nucleotide sequence ID" value="NC_011184.1"/>
</dbReference>
<dbReference type="SMR" id="B5FB38"/>
<dbReference type="KEGG" id="vfm:VFMJ11_2316"/>
<dbReference type="HOGENOM" id="CLU_023982_0_0_6"/>
<dbReference type="UniPathway" id="UPA00219"/>
<dbReference type="Proteomes" id="UP000001857">
    <property type="component" value="Chromosome I"/>
</dbReference>
<dbReference type="GO" id="GO:0005886">
    <property type="term" value="C:plasma membrane"/>
    <property type="evidence" value="ECO:0007669"/>
    <property type="project" value="UniProtKB-SubCell"/>
</dbReference>
<dbReference type="GO" id="GO:0046872">
    <property type="term" value="F:metal ion binding"/>
    <property type="evidence" value="ECO:0007669"/>
    <property type="project" value="UniProtKB-KW"/>
</dbReference>
<dbReference type="GO" id="GO:0008963">
    <property type="term" value="F:phospho-N-acetylmuramoyl-pentapeptide-transferase activity"/>
    <property type="evidence" value="ECO:0007669"/>
    <property type="project" value="UniProtKB-UniRule"/>
</dbReference>
<dbReference type="GO" id="GO:0051992">
    <property type="term" value="F:UDP-N-acetylmuramoyl-L-alanyl-D-glutamyl-meso-2,6-diaminopimelyl-D-alanyl-D-alanine:undecaprenyl-phosphate transferase activity"/>
    <property type="evidence" value="ECO:0007669"/>
    <property type="project" value="RHEA"/>
</dbReference>
<dbReference type="GO" id="GO:0051301">
    <property type="term" value="P:cell division"/>
    <property type="evidence" value="ECO:0007669"/>
    <property type="project" value="UniProtKB-KW"/>
</dbReference>
<dbReference type="GO" id="GO:0071555">
    <property type="term" value="P:cell wall organization"/>
    <property type="evidence" value="ECO:0007669"/>
    <property type="project" value="UniProtKB-KW"/>
</dbReference>
<dbReference type="GO" id="GO:0009252">
    <property type="term" value="P:peptidoglycan biosynthetic process"/>
    <property type="evidence" value="ECO:0007669"/>
    <property type="project" value="UniProtKB-UniRule"/>
</dbReference>
<dbReference type="GO" id="GO:0008360">
    <property type="term" value="P:regulation of cell shape"/>
    <property type="evidence" value="ECO:0007669"/>
    <property type="project" value="UniProtKB-KW"/>
</dbReference>
<dbReference type="CDD" id="cd06852">
    <property type="entry name" value="GT_MraY"/>
    <property type="match status" value="1"/>
</dbReference>
<dbReference type="HAMAP" id="MF_00038">
    <property type="entry name" value="MraY"/>
    <property type="match status" value="1"/>
</dbReference>
<dbReference type="InterPro" id="IPR000715">
    <property type="entry name" value="Glycosyl_transferase_4"/>
</dbReference>
<dbReference type="InterPro" id="IPR003524">
    <property type="entry name" value="PNAcMuramoyl-5peptid_Trfase"/>
</dbReference>
<dbReference type="InterPro" id="IPR018480">
    <property type="entry name" value="PNAcMuramoyl-5peptid_Trfase_CS"/>
</dbReference>
<dbReference type="NCBIfam" id="TIGR00445">
    <property type="entry name" value="mraY"/>
    <property type="match status" value="1"/>
</dbReference>
<dbReference type="PANTHER" id="PTHR22926">
    <property type="entry name" value="PHOSPHO-N-ACETYLMURAMOYL-PENTAPEPTIDE-TRANSFERASE"/>
    <property type="match status" value="1"/>
</dbReference>
<dbReference type="PANTHER" id="PTHR22926:SF5">
    <property type="entry name" value="PHOSPHO-N-ACETYLMURAMOYL-PENTAPEPTIDE-TRANSFERASE HOMOLOG"/>
    <property type="match status" value="1"/>
</dbReference>
<dbReference type="Pfam" id="PF00953">
    <property type="entry name" value="Glycos_transf_4"/>
    <property type="match status" value="1"/>
</dbReference>
<dbReference type="Pfam" id="PF10555">
    <property type="entry name" value="MraY_sig1"/>
    <property type="match status" value="1"/>
</dbReference>
<dbReference type="PROSITE" id="PS01347">
    <property type="entry name" value="MRAY_1"/>
    <property type="match status" value="1"/>
</dbReference>
<dbReference type="PROSITE" id="PS01348">
    <property type="entry name" value="MRAY_2"/>
    <property type="match status" value="1"/>
</dbReference>
<evidence type="ECO:0000255" key="1">
    <source>
        <dbReference type="HAMAP-Rule" id="MF_00038"/>
    </source>
</evidence>
<reference key="1">
    <citation type="submission" date="2008-08" db="EMBL/GenBank/DDBJ databases">
        <title>Complete sequence of Vibrio fischeri strain MJ11.</title>
        <authorList>
            <person name="Mandel M.J."/>
            <person name="Stabb E.V."/>
            <person name="Ruby E.G."/>
            <person name="Ferriera S."/>
            <person name="Johnson J."/>
            <person name="Kravitz S."/>
            <person name="Beeson K."/>
            <person name="Sutton G."/>
            <person name="Rogers Y.-H."/>
            <person name="Friedman R."/>
            <person name="Frazier M."/>
            <person name="Venter J.C."/>
        </authorList>
    </citation>
    <scope>NUCLEOTIDE SEQUENCE [LARGE SCALE GENOMIC DNA]</scope>
    <source>
        <strain>MJ11</strain>
    </source>
</reference>
<name>MRAY_ALIFM</name>
<sequence>MIIWLSNFLEQYFPFFRLFEYLSFRAILSIITALTISLWMGPKLIAWLQNLQIGQVVRDDGPESHFSKRGTPTMGGIMILTAISVTVFLWADLTNPYVWAVMFVLLGYGAVGFVDDYRKVVRKNTDGLIARWKYFWQSSIALVVAFALYAYGKDTAATQLVVPFFKEVMPQLGLAYILLTYFVIVGTSNAVNLTDGLDGLAIMPTVFVAAGFAFIAWATGNVQFANYLHIPHIPLASELVVVCAAIVGAGFGFLWFNTYPAQVFMGDVGSLALGGALGTIAVLVRQEFLLVIMGGVFVVETLSVILQVGSYKLRGQRIFRMAPIHHHYELKGWPEPRVIVRFWIISMLLVLIALATLKVR</sequence>
<accession>B5FB38</accession>
<keyword id="KW-0131">Cell cycle</keyword>
<keyword id="KW-0132">Cell division</keyword>
<keyword id="KW-0997">Cell inner membrane</keyword>
<keyword id="KW-1003">Cell membrane</keyword>
<keyword id="KW-0133">Cell shape</keyword>
<keyword id="KW-0961">Cell wall biogenesis/degradation</keyword>
<keyword id="KW-0460">Magnesium</keyword>
<keyword id="KW-0472">Membrane</keyword>
<keyword id="KW-0479">Metal-binding</keyword>
<keyword id="KW-0573">Peptidoglycan synthesis</keyword>
<keyword id="KW-0808">Transferase</keyword>
<keyword id="KW-0812">Transmembrane</keyword>
<keyword id="KW-1133">Transmembrane helix</keyword>
<protein>
    <recommendedName>
        <fullName evidence="1">Phospho-N-acetylmuramoyl-pentapeptide-transferase</fullName>
        <ecNumber evidence="1">2.7.8.13</ecNumber>
    </recommendedName>
    <alternativeName>
        <fullName evidence="1">UDP-MurNAc-pentapeptide phosphotransferase</fullName>
    </alternativeName>
</protein>